<accession>Q2A2J3</accession>
<sequence>MSRVKRGVTARARHKKVLNQAKGYYGARSRVYRVAKQAVIKAGQYAYRDRKVKKRTFRSLWIVRINAAARQHDISYSQLINGLNKADVELDRKALAELAVYNKDAFAAVVEKAKAALA</sequence>
<keyword id="KW-1185">Reference proteome</keyword>
<keyword id="KW-0687">Ribonucleoprotein</keyword>
<keyword id="KW-0689">Ribosomal protein</keyword>
<keyword id="KW-0694">RNA-binding</keyword>
<keyword id="KW-0699">rRNA-binding</keyword>
<organism>
    <name type="scientific">Francisella tularensis subsp. holarctica (strain LVS)</name>
    <dbReference type="NCBI Taxonomy" id="376619"/>
    <lineage>
        <taxon>Bacteria</taxon>
        <taxon>Pseudomonadati</taxon>
        <taxon>Pseudomonadota</taxon>
        <taxon>Gammaproteobacteria</taxon>
        <taxon>Thiotrichales</taxon>
        <taxon>Francisellaceae</taxon>
        <taxon>Francisella</taxon>
    </lineage>
</organism>
<dbReference type="EMBL" id="AM233362">
    <property type="protein sequence ID" value="CAJ79843.1"/>
    <property type="molecule type" value="Genomic_DNA"/>
</dbReference>
<dbReference type="RefSeq" id="WP_003016668.1">
    <property type="nucleotide sequence ID" value="NZ_CP009694.1"/>
</dbReference>
<dbReference type="SMR" id="Q2A2J3"/>
<dbReference type="KEGG" id="ftl:FTL_1404"/>
<dbReference type="Proteomes" id="UP000001944">
    <property type="component" value="Chromosome"/>
</dbReference>
<dbReference type="GO" id="GO:1990904">
    <property type="term" value="C:ribonucleoprotein complex"/>
    <property type="evidence" value="ECO:0007669"/>
    <property type="project" value="UniProtKB-KW"/>
</dbReference>
<dbReference type="GO" id="GO:0005840">
    <property type="term" value="C:ribosome"/>
    <property type="evidence" value="ECO:0007669"/>
    <property type="project" value="UniProtKB-KW"/>
</dbReference>
<dbReference type="GO" id="GO:0019843">
    <property type="term" value="F:rRNA binding"/>
    <property type="evidence" value="ECO:0007669"/>
    <property type="project" value="UniProtKB-UniRule"/>
</dbReference>
<dbReference type="GO" id="GO:0003735">
    <property type="term" value="F:structural constituent of ribosome"/>
    <property type="evidence" value="ECO:0007669"/>
    <property type="project" value="InterPro"/>
</dbReference>
<dbReference type="GO" id="GO:0000027">
    <property type="term" value="P:ribosomal large subunit assembly"/>
    <property type="evidence" value="ECO:0007669"/>
    <property type="project" value="UniProtKB-UniRule"/>
</dbReference>
<dbReference type="GO" id="GO:0006412">
    <property type="term" value="P:translation"/>
    <property type="evidence" value="ECO:0007669"/>
    <property type="project" value="InterPro"/>
</dbReference>
<dbReference type="CDD" id="cd07026">
    <property type="entry name" value="Ribosomal_L20"/>
    <property type="match status" value="1"/>
</dbReference>
<dbReference type="FunFam" id="1.10.1900.20:FF:000001">
    <property type="entry name" value="50S ribosomal protein L20"/>
    <property type="match status" value="1"/>
</dbReference>
<dbReference type="Gene3D" id="6.10.160.10">
    <property type="match status" value="1"/>
</dbReference>
<dbReference type="Gene3D" id="1.10.1900.20">
    <property type="entry name" value="Ribosomal protein L20"/>
    <property type="match status" value="1"/>
</dbReference>
<dbReference type="HAMAP" id="MF_00382">
    <property type="entry name" value="Ribosomal_bL20"/>
    <property type="match status" value="1"/>
</dbReference>
<dbReference type="InterPro" id="IPR005813">
    <property type="entry name" value="Ribosomal_bL20"/>
</dbReference>
<dbReference type="InterPro" id="IPR049946">
    <property type="entry name" value="RIBOSOMAL_L20_CS"/>
</dbReference>
<dbReference type="InterPro" id="IPR035566">
    <property type="entry name" value="Ribosomal_protein_bL20_C"/>
</dbReference>
<dbReference type="NCBIfam" id="TIGR01032">
    <property type="entry name" value="rplT_bact"/>
    <property type="match status" value="1"/>
</dbReference>
<dbReference type="PANTHER" id="PTHR10986">
    <property type="entry name" value="39S RIBOSOMAL PROTEIN L20"/>
    <property type="match status" value="1"/>
</dbReference>
<dbReference type="Pfam" id="PF00453">
    <property type="entry name" value="Ribosomal_L20"/>
    <property type="match status" value="1"/>
</dbReference>
<dbReference type="PRINTS" id="PR00062">
    <property type="entry name" value="RIBOSOMALL20"/>
</dbReference>
<dbReference type="SUPFAM" id="SSF74731">
    <property type="entry name" value="Ribosomal protein L20"/>
    <property type="match status" value="1"/>
</dbReference>
<dbReference type="PROSITE" id="PS00937">
    <property type="entry name" value="RIBOSOMAL_L20"/>
    <property type="match status" value="1"/>
</dbReference>
<reference key="1">
    <citation type="submission" date="2006-03" db="EMBL/GenBank/DDBJ databases">
        <title>Complete genome sequence of Francisella tularensis LVS (Live Vaccine Strain).</title>
        <authorList>
            <person name="Chain P."/>
            <person name="Larimer F."/>
            <person name="Land M."/>
            <person name="Stilwagen S."/>
            <person name="Larsson P."/>
            <person name="Bearden S."/>
            <person name="Chu M."/>
            <person name="Oyston P."/>
            <person name="Forsman M."/>
            <person name="Andersson S."/>
            <person name="Lindler L."/>
            <person name="Titball R."/>
            <person name="Garcia E."/>
        </authorList>
    </citation>
    <scope>NUCLEOTIDE SEQUENCE [LARGE SCALE GENOMIC DNA]</scope>
    <source>
        <strain>LVS</strain>
    </source>
</reference>
<evidence type="ECO:0000255" key="1">
    <source>
        <dbReference type="HAMAP-Rule" id="MF_00382"/>
    </source>
</evidence>
<evidence type="ECO:0000305" key="2"/>
<proteinExistence type="inferred from homology"/>
<feature type="chain" id="PRO_1000048980" description="Large ribosomal subunit protein bL20">
    <location>
        <begin position="1"/>
        <end position="118"/>
    </location>
</feature>
<protein>
    <recommendedName>
        <fullName evidence="1">Large ribosomal subunit protein bL20</fullName>
    </recommendedName>
    <alternativeName>
        <fullName evidence="2">50S ribosomal protein L20</fullName>
    </alternativeName>
</protein>
<gene>
    <name evidence="1" type="primary">rplT</name>
    <name type="ordered locus">FTL_1404</name>
</gene>
<name>RL20_FRATH</name>
<comment type="function">
    <text evidence="1">Binds directly to 23S ribosomal RNA and is necessary for the in vitro assembly process of the 50S ribosomal subunit. It is not involved in the protein synthesizing functions of that subunit.</text>
</comment>
<comment type="similarity">
    <text evidence="1">Belongs to the bacterial ribosomal protein bL20 family.</text>
</comment>